<organism>
    <name type="scientific">Burkholderia ambifaria (strain ATCC BAA-244 / DSM 16087 / CCUG 44356 / LMG 19182 / AMMD)</name>
    <name type="common">Burkholderia cepacia (strain AMMD)</name>
    <dbReference type="NCBI Taxonomy" id="339670"/>
    <lineage>
        <taxon>Bacteria</taxon>
        <taxon>Pseudomonadati</taxon>
        <taxon>Pseudomonadota</taxon>
        <taxon>Betaproteobacteria</taxon>
        <taxon>Burkholderiales</taxon>
        <taxon>Burkholderiaceae</taxon>
        <taxon>Burkholderia</taxon>
        <taxon>Burkholderia cepacia complex</taxon>
    </lineage>
</organism>
<comment type="function">
    <text evidence="1">Removes the pyruvyl group from chorismate, with concomitant aromatization of the ring, to provide 4-hydroxybenzoate (4HB) for the ubiquinone pathway.</text>
</comment>
<comment type="catalytic activity">
    <reaction evidence="1">
        <text>chorismate = 4-hydroxybenzoate + pyruvate</text>
        <dbReference type="Rhea" id="RHEA:16505"/>
        <dbReference type="ChEBI" id="CHEBI:15361"/>
        <dbReference type="ChEBI" id="CHEBI:17879"/>
        <dbReference type="ChEBI" id="CHEBI:29748"/>
        <dbReference type="EC" id="4.1.3.40"/>
    </reaction>
</comment>
<comment type="pathway">
    <text evidence="1">Cofactor biosynthesis; ubiquinone biosynthesis.</text>
</comment>
<comment type="subcellular location">
    <subcellularLocation>
        <location evidence="1">Cytoplasm</location>
    </subcellularLocation>
</comment>
<comment type="similarity">
    <text evidence="1">Belongs to the UbiC family.</text>
</comment>
<dbReference type="EC" id="4.1.3.40" evidence="1"/>
<dbReference type="EMBL" id="CP000440">
    <property type="protein sequence ID" value="ABI87938.1"/>
    <property type="molecule type" value="Genomic_DNA"/>
</dbReference>
<dbReference type="SMR" id="Q0BD35"/>
<dbReference type="KEGG" id="bam:Bamb_2382"/>
<dbReference type="PATRIC" id="fig|339670.21.peg.2540"/>
<dbReference type="eggNOG" id="COG3161">
    <property type="taxonomic scope" value="Bacteria"/>
</dbReference>
<dbReference type="UniPathway" id="UPA00232"/>
<dbReference type="Proteomes" id="UP000000662">
    <property type="component" value="Chromosome 1"/>
</dbReference>
<dbReference type="GO" id="GO:0005829">
    <property type="term" value="C:cytosol"/>
    <property type="evidence" value="ECO:0007669"/>
    <property type="project" value="TreeGrafter"/>
</dbReference>
<dbReference type="GO" id="GO:0008813">
    <property type="term" value="F:chorismate lyase activity"/>
    <property type="evidence" value="ECO:0007669"/>
    <property type="project" value="UniProtKB-UniRule"/>
</dbReference>
<dbReference type="GO" id="GO:0042866">
    <property type="term" value="P:pyruvate biosynthetic process"/>
    <property type="evidence" value="ECO:0007669"/>
    <property type="project" value="UniProtKB-UniRule"/>
</dbReference>
<dbReference type="GO" id="GO:0006744">
    <property type="term" value="P:ubiquinone biosynthetic process"/>
    <property type="evidence" value="ECO:0007669"/>
    <property type="project" value="UniProtKB-UniRule"/>
</dbReference>
<dbReference type="Gene3D" id="3.40.1410.10">
    <property type="entry name" value="Chorismate lyase-like"/>
    <property type="match status" value="1"/>
</dbReference>
<dbReference type="HAMAP" id="MF_01632">
    <property type="entry name" value="UbiC"/>
    <property type="match status" value="1"/>
</dbReference>
<dbReference type="InterPro" id="IPR007440">
    <property type="entry name" value="Chorismate--pyruvate_lyase"/>
</dbReference>
<dbReference type="InterPro" id="IPR028978">
    <property type="entry name" value="Chorismate_lyase_/UTRA_dom_sf"/>
</dbReference>
<dbReference type="PANTHER" id="PTHR38683">
    <property type="entry name" value="CHORISMATE PYRUVATE-LYASE"/>
    <property type="match status" value="1"/>
</dbReference>
<dbReference type="PANTHER" id="PTHR38683:SF1">
    <property type="entry name" value="CHORISMATE PYRUVATE-LYASE"/>
    <property type="match status" value="1"/>
</dbReference>
<dbReference type="Pfam" id="PF04345">
    <property type="entry name" value="Chor_lyase"/>
    <property type="match status" value="1"/>
</dbReference>
<dbReference type="SUPFAM" id="SSF64288">
    <property type="entry name" value="Chorismate lyase-like"/>
    <property type="match status" value="1"/>
</dbReference>
<feature type="chain" id="PRO_0000292065" description="Probable chorismate pyruvate-lyase">
    <location>
        <begin position="1"/>
        <end position="197"/>
    </location>
</feature>
<feature type="binding site" evidence="1">
    <location>
        <position position="77"/>
    </location>
    <ligand>
        <name>substrate</name>
    </ligand>
</feature>
<feature type="binding site" evidence="1">
    <location>
        <position position="115"/>
    </location>
    <ligand>
        <name>substrate</name>
    </ligand>
</feature>
<feature type="binding site" evidence="1">
    <location>
        <position position="176"/>
    </location>
    <ligand>
        <name>substrate</name>
    </ligand>
</feature>
<protein>
    <recommendedName>
        <fullName evidence="1">Probable chorismate pyruvate-lyase</fullName>
        <shortName evidence="1">CL</shortName>
        <shortName evidence="1">CPL</shortName>
        <ecNumber evidence="1">4.1.3.40</ecNumber>
    </recommendedName>
</protein>
<evidence type="ECO:0000255" key="1">
    <source>
        <dbReference type="HAMAP-Rule" id="MF_01632"/>
    </source>
</evidence>
<name>UBIC_BURCM</name>
<keyword id="KW-0963">Cytoplasm</keyword>
<keyword id="KW-0456">Lyase</keyword>
<keyword id="KW-0670">Pyruvate</keyword>
<keyword id="KW-0831">Ubiquinone biosynthesis</keyword>
<reference key="1">
    <citation type="submission" date="2006-08" db="EMBL/GenBank/DDBJ databases">
        <title>Complete sequence of chromosome 1 of Burkholderia cepacia AMMD.</title>
        <authorList>
            <person name="Copeland A."/>
            <person name="Lucas S."/>
            <person name="Lapidus A."/>
            <person name="Barry K."/>
            <person name="Detter J.C."/>
            <person name="Glavina del Rio T."/>
            <person name="Hammon N."/>
            <person name="Israni S."/>
            <person name="Pitluck S."/>
            <person name="Bruce D."/>
            <person name="Chain P."/>
            <person name="Malfatti S."/>
            <person name="Shin M."/>
            <person name="Vergez L."/>
            <person name="Schmutz J."/>
            <person name="Larimer F."/>
            <person name="Land M."/>
            <person name="Hauser L."/>
            <person name="Kyrpides N."/>
            <person name="Kim E."/>
            <person name="Parke J."/>
            <person name="Coenye T."/>
            <person name="Konstantinidis K."/>
            <person name="Ramette A."/>
            <person name="Tiedje J."/>
            <person name="Richardson P."/>
        </authorList>
    </citation>
    <scope>NUCLEOTIDE SEQUENCE [LARGE SCALE GENOMIC DNA]</scope>
    <source>
        <strain>ATCC BAA-244 / DSM 16087 / CCUG 44356 / LMG 19182 / AMMD</strain>
    </source>
</reference>
<sequence>MSKRIRFDGAQAGWRATPRPGCTLDQRDWLTRGGSLTAHLARLGSVSVRVTREAVDCPWFDEPDALDSAPRAPMWVREVILSVDGTPYVAAHSIAPLAASKGGWQAMRRLRTRPLAELLYSDPQVERSALVSRRVIAGHPLYALASHALQGARAPHAFVARRSVFQRHGTPLMVTECMLPALWRHLDAHGDGPRGAA</sequence>
<gene>
    <name evidence="1" type="primary">ubiC</name>
    <name type="ordered locus">Bamb_2382</name>
</gene>
<proteinExistence type="inferred from homology"/>
<accession>Q0BD35</accession>